<accession>P55459</accession>
<gene>
    <name type="ordered locus">NGR_a03610</name>
    <name type="ORF">y4gC</name>
</gene>
<geneLocation type="plasmid">
    <name>sym pNGR234a</name>
</geneLocation>
<protein>
    <recommendedName>
        <fullName>Putative integrase/recombinase y4gC</fullName>
    </recommendedName>
</protein>
<organism>
    <name type="scientific">Sinorhizobium fredii (strain NBRC 101917 / NGR234)</name>
    <dbReference type="NCBI Taxonomy" id="394"/>
    <lineage>
        <taxon>Bacteria</taxon>
        <taxon>Pseudomonadati</taxon>
        <taxon>Pseudomonadota</taxon>
        <taxon>Alphaproteobacteria</taxon>
        <taxon>Hyphomicrobiales</taxon>
        <taxon>Rhizobiaceae</taxon>
        <taxon>Sinorhizobium/Ensifer group</taxon>
        <taxon>Sinorhizobium</taxon>
    </lineage>
</organism>
<evidence type="ECO:0000255" key="1">
    <source>
        <dbReference type="PROSITE-ProRule" id="PRU01246"/>
    </source>
</evidence>
<evidence type="ECO:0000305" key="2"/>
<keyword id="KW-0229">DNA integration</keyword>
<keyword id="KW-0233">DNA recombination</keyword>
<keyword id="KW-0614">Plasmid</keyword>
<keyword id="KW-1185">Reference proteome</keyword>
<keyword id="KW-0814">Transposable element</keyword>
<keyword id="KW-1179">Viral genome integration</keyword>
<keyword id="KW-1160">Virus entry into host cell</keyword>
<feature type="chain" id="PRO_0000197576" description="Putative integrase/recombinase y4gC">
    <location>
        <begin position="1"/>
        <end position="192"/>
    </location>
</feature>
<feature type="domain" description="Tyr recombinase" evidence="1">
    <location>
        <begin position="1"/>
        <end position="183"/>
    </location>
</feature>
<feature type="active site" evidence="1">
    <location>
        <position position="41"/>
    </location>
</feature>
<feature type="active site" evidence="1">
    <location>
        <position position="66"/>
    </location>
</feature>
<feature type="active site" evidence="1">
    <location>
        <position position="135"/>
    </location>
</feature>
<feature type="active site" evidence="1">
    <location>
        <position position="138"/>
    </location>
</feature>
<feature type="active site" evidence="1">
    <location>
        <position position="161"/>
    </location>
</feature>
<feature type="active site" description="O-(3'-phospho-DNA)-tyrosine intermediate" evidence="1">
    <location>
        <position position="170"/>
    </location>
</feature>
<proteinExistence type="inferred from homology"/>
<name>Y4GC_SINFN</name>
<sequence length="192" mass="21577">MPSILERDQIAAVLVSASRDKTPAGLRDHAILQLLATYGLRSGEIRNMRIEDIDWRTETIRVRHSKTQAYTLLPLTEPVGEAILVYLRSGRPATDARELFVRTRAPYRKLDKLYSMVRRRLRDAGVKPRGKRGPHIFRHARATELLRAAVPQKIIGELLGHRSIASTAPYLKLATEDLRAIALDLPGTEVSA</sequence>
<comment type="similarity">
    <text evidence="2">Belongs to the 'phage' integrase family.</text>
</comment>
<dbReference type="EMBL" id="U00090">
    <property type="protein sequence ID" value="AAB91677.1"/>
    <property type="molecule type" value="Genomic_DNA"/>
</dbReference>
<dbReference type="RefSeq" id="NP_443865.1">
    <property type="nucleotide sequence ID" value="NC_000914.2"/>
</dbReference>
<dbReference type="SMR" id="P55459"/>
<dbReference type="KEGG" id="rhi:NGR_a03610"/>
<dbReference type="eggNOG" id="COG4974">
    <property type="taxonomic scope" value="Bacteria"/>
</dbReference>
<dbReference type="HOGENOM" id="CLU_027562_39_2_5"/>
<dbReference type="OrthoDB" id="67979at2"/>
<dbReference type="Proteomes" id="UP000001054">
    <property type="component" value="Plasmid pNGR234a"/>
</dbReference>
<dbReference type="GO" id="GO:0003677">
    <property type="term" value="F:DNA binding"/>
    <property type="evidence" value="ECO:0007669"/>
    <property type="project" value="InterPro"/>
</dbReference>
<dbReference type="GO" id="GO:0015074">
    <property type="term" value="P:DNA integration"/>
    <property type="evidence" value="ECO:0007669"/>
    <property type="project" value="UniProtKB-KW"/>
</dbReference>
<dbReference type="GO" id="GO:0006310">
    <property type="term" value="P:DNA recombination"/>
    <property type="evidence" value="ECO:0007669"/>
    <property type="project" value="UniProtKB-KW"/>
</dbReference>
<dbReference type="GO" id="GO:0075713">
    <property type="term" value="P:establishment of integrated proviral latency"/>
    <property type="evidence" value="ECO:0007669"/>
    <property type="project" value="UniProtKB-KW"/>
</dbReference>
<dbReference type="GO" id="GO:0046718">
    <property type="term" value="P:symbiont entry into host cell"/>
    <property type="evidence" value="ECO:0007669"/>
    <property type="project" value="UniProtKB-KW"/>
</dbReference>
<dbReference type="GO" id="GO:0044826">
    <property type="term" value="P:viral genome integration into host DNA"/>
    <property type="evidence" value="ECO:0007669"/>
    <property type="project" value="UniProtKB-KW"/>
</dbReference>
<dbReference type="CDD" id="cd01188">
    <property type="entry name" value="INT_RitA_C_like"/>
    <property type="match status" value="1"/>
</dbReference>
<dbReference type="Gene3D" id="1.10.443.10">
    <property type="entry name" value="Intergrase catalytic core"/>
    <property type="match status" value="1"/>
</dbReference>
<dbReference type="InterPro" id="IPR011010">
    <property type="entry name" value="DNA_brk_join_enz"/>
</dbReference>
<dbReference type="InterPro" id="IPR013762">
    <property type="entry name" value="Integrase-like_cat_sf"/>
</dbReference>
<dbReference type="InterPro" id="IPR002104">
    <property type="entry name" value="Integrase_catalytic"/>
</dbReference>
<dbReference type="InterPro" id="IPR050090">
    <property type="entry name" value="Tyrosine_recombinase_XerCD"/>
</dbReference>
<dbReference type="PANTHER" id="PTHR30349">
    <property type="entry name" value="PHAGE INTEGRASE-RELATED"/>
    <property type="match status" value="1"/>
</dbReference>
<dbReference type="PANTHER" id="PTHR30349:SF90">
    <property type="entry name" value="TYROSINE RECOMBINASE XERD"/>
    <property type="match status" value="1"/>
</dbReference>
<dbReference type="Pfam" id="PF00589">
    <property type="entry name" value="Phage_integrase"/>
    <property type="match status" value="1"/>
</dbReference>
<dbReference type="SUPFAM" id="SSF56349">
    <property type="entry name" value="DNA breaking-rejoining enzymes"/>
    <property type="match status" value="1"/>
</dbReference>
<dbReference type="PROSITE" id="PS51898">
    <property type="entry name" value="TYR_RECOMBINASE"/>
    <property type="match status" value="1"/>
</dbReference>
<reference key="1">
    <citation type="journal article" date="1997" name="Nature">
        <title>Molecular basis of symbiosis between Rhizobium and legumes.</title>
        <authorList>
            <person name="Freiberg C.A."/>
            <person name="Fellay R."/>
            <person name="Bairoch A."/>
            <person name="Broughton W.J."/>
            <person name="Rosenthal A."/>
            <person name="Perret X."/>
        </authorList>
    </citation>
    <scope>NUCLEOTIDE SEQUENCE [LARGE SCALE GENOMIC DNA]</scope>
    <source>
        <strain>NBRC 101917 / NGR234</strain>
    </source>
</reference>
<reference key="2">
    <citation type="journal article" date="2009" name="Appl. Environ. Microbiol.">
        <title>Rhizobium sp. strain NGR234 possesses a remarkable number of secretion systems.</title>
        <authorList>
            <person name="Schmeisser C."/>
            <person name="Liesegang H."/>
            <person name="Krysciak D."/>
            <person name="Bakkou N."/>
            <person name="Le Quere A."/>
            <person name="Wollherr A."/>
            <person name="Heinemeyer I."/>
            <person name="Morgenstern B."/>
            <person name="Pommerening-Roeser A."/>
            <person name="Flores M."/>
            <person name="Palacios R."/>
            <person name="Brenner S."/>
            <person name="Gottschalk G."/>
            <person name="Schmitz R.A."/>
            <person name="Broughton W.J."/>
            <person name="Perret X."/>
            <person name="Strittmatter A.W."/>
            <person name="Streit W.R."/>
        </authorList>
    </citation>
    <scope>NUCLEOTIDE SEQUENCE [LARGE SCALE GENOMIC DNA]</scope>
    <source>
        <strain>NBRC 101917 / NGR234</strain>
    </source>
</reference>